<proteinExistence type="inferred from homology"/>
<protein>
    <recommendedName>
        <fullName evidence="1">Cytochrome b6</fullName>
    </recommendedName>
</protein>
<gene>
    <name evidence="1" type="primary">petB</name>
    <name type="ordered locus">SYNW1967</name>
</gene>
<keyword id="KW-0249">Electron transport</keyword>
<keyword id="KW-0349">Heme</keyword>
<keyword id="KW-0408">Iron</keyword>
<keyword id="KW-0472">Membrane</keyword>
<keyword id="KW-0479">Metal-binding</keyword>
<keyword id="KW-0602">Photosynthesis</keyword>
<keyword id="KW-0793">Thylakoid</keyword>
<keyword id="KW-0812">Transmembrane</keyword>
<keyword id="KW-1133">Transmembrane helix</keyword>
<keyword id="KW-0813">Transport</keyword>
<accession>Q7U4U6</accession>
<reference key="1">
    <citation type="journal article" date="2003" name="Nature">
        <title>The genome of a motile marine Synechococcus.</title>
        <authorList>
            <person name="Palenik B."/>
            <person name="Brahamsha B."/>
            <person name="Larimer F.W."/>
            <person name="Land M.L."/>
            <person name="Hauser L."/>
            <person name="Chain P."/>
            <person name="Lamerdin J.E."/>
            <person name="Regala W."/>
            <person name="Allen E.E."/>
            <person name="McCarren J."/>
            <person name="Paulsen I.T."/>
            <person name="Dufresne A."/>
            <person name="Partensky F."/>
            <person name="Webb E.A."/>
            <person name="Waterbury J."/>
        </authorList>
    </citation>
    <scope>NUCLEOTIDE SEQUENCE [LARGE SCALE GENOMIC DNA]</scope>
    <source>
        <strain>WH8102</strain>
    </source>
</reference>
<evidence type="ECO:0000255" key="1">
    <source>
        <dbReference type="HAMAP-Rule" id="MF_00633"/>
    </source>
</evidence>
<comment type="function">
    <text evidence="1">Component of the cytochrome b6-f complex, which mediates electron transfer between photosystem II (PSII) and photosystem I (PSI), cyclic electron flow around PSI, and state transitions.</text>
</comment>
<comment type="cofactor">
    <cofactor evidence="1">
        <name>heme b</name>
        <dbReference type="ChEBI" id="CHEBI:60344"/>
    </cofactor>
    <text evidence="1">Binds 2 heme b groups non-covalently with two histidine residues as axial ligands.</text>
</comment>
<comment type="cofactor">
    <cofactor evidence="1">
        <name>heme c</name>
        <dbReference type="ChEBI" id="CHEBI:61717"/>
    </cofactor>
    <text evidence="1">Binds one heme group covalently by a single cysteine link with no axial amino acid ligand. This heme was named heme ci.</text>
</comment>
<comment type="subunit">
    <text evidence="1">The 4 large subunits of the cytochrome b6-f complex are cytochrome b6, subunit IV (17 kDa polypeptide, PetD), cytochrome f and the Rieske protein, while the 4 small subunits are PetG, PetL, PetM and PetN. The complex functions as a dimer.</text>
</comment>
<comment type="subcellular location">
    <subcellularLocation>
        <location evidence="1">Cellular thylakoid membrane</location>
        <topology evidence="1">Multi-pass membrane protein</topology>
    </subcellularLocation>
</comment>
<comment type="miscellaneous">
    <text evidence="1">Heme 1 (or BH or b566) is high-potential and absorbs at about 566 nm, and heme 2 (or BL or b562) is low-potential and absorbs at about 562 nm.</text>
</comment>
<comment type="similarity">
    <text evidence="1">Belongs to the cytochrome b family. PetB subfamily.</text>
</comment>
<dbReference type="EMBL" id="BX569694">
    <property type="protein sequence ID" value="CAE08482.1"/>
    <property type="molecule type" value="Genomic_DNA"/>
</dbReference>
<dbReference type="RefSeq" id="WP_011128825.1">
    <property type="nucleotide sequence ID" value="NC_005070.1"/>
</dbReference>
<dbReference type="SMR" id="Q7U4U6"/>
<dbReference type="STRING" id="84588.SYNW1967"/>
<dbReference type="KEGG" id="syw:SYNW1967"/>
<dbReference type="eggNOG" id="COG1290">
    <property type="taxonomic scope" value="Bacteria"/>
</dbReference>
<dbReference type="HOGENOM" id="CLU_031114_0_2_3"/>
<dbReference type="BioCyc" id="MetaCyc:TX72_RS09910-MONOMER"/>
<dbReference type="Proteomes" id="UP000001422">
    <property type="component" value="Chromosome"/>
</dbReference>
<dbReference type="GO" id="GO:0031676">
    <property type="term" value="C:plasma membrane-derived thylakoid membrane"/>
    <property type="evidence" value="ECO:0007669"/>
    <property type="project" value="UniProtKB-SubCell"/>
</dbReference>
<dbReference type="GO" id="GO:0045158">
    <property type="term" value="F:electron transporter, transferring electrons within cytochrome b6/f complex of photosystem II activity"/>
    <property type="evidence" value="ECO:0007669"/>
    <property type="project" value="UniProtKB-UniRule"/>
</dbReference>
<dbReference type="GO" id="GO:0046872">
    <property type="term" value="F:metal ion binding"/>
    <property type="evidence" value="ECO:0007669"/>
    <property type="project" value="UniProtKB-KW"/>
</dbReference>
<dbReference type="GO" id="GO:0016491">
    <property type="term" value="F:oxidoreductase activity"/>
    <property type="evidence" value="ECO:0007669"/>
    <property type="project" value="InterPro"/>
</dbReference>
<dbReference type="GO" id="GO:0015979">
    <property type="term" value="P:photosynthesis"/>
    <property type="evidence" value="ECO:0007669"/>
    <property type="project" value="UniProtKB-UniRule"/>
</dbReference>
<dbReference type="GO" id="GO:0022904">
    <property type="term" value="P:respiratory electron transport chain"/>
    <property type="evidence" value="ECO:0007669"/>
    <property type="project" value="InterPro"/>
</dbReference>
<dbReference type="CDD" id="cd00284">
    <property type="entry name" value="Cytochrome_b_N"/>
    <property type="match status" value="1"/>
</dbReference>
<dbReference type="FunFam" id="1.20.810.10:FF:000001">
    <property type="entry name" value="Cytochrome b6"/>
    <property type="match status" value="1"/>
</dbReference>
<dbReference type="Gene3D" id="1.20.810.10">
    <property type="entry name" value="Cytochrome Bc1 Complex, Chain C"/>
    <property type="match status" value="1"/>
</dbReference>
<dbReference type="HAMAP" id="MF_00633">
    <property type="entry name" value="Cytb6_f_cytb6"/>
    <property type="match status" value="1"/>
</dbReference>
<dbReference type="InterPro" id="IPR005797">
    <property type="entry name" value="Cyt_b/b6_N"/>
</dbReference>
<dbReference type="InterPro" id="IPR023530">
    <property type="entry name" value="Cyt_B6_PetB"/>
</dbReference>
<dbReference type="InterPro" id="IPR027387">
    <property type="entry name" value="Cytb/b6-like_sf"/>
</dbReference>
<dbReference type="InterPro" id="IPR048259">
    <property type="entry name" value="Cytochrome_b_N_euk/bac"/>
</dbReference>
<dbReference type="InterPro" id="IPR016174">
    <property type="entry name" value="Di-haem_cyt_TM"/>
</dbReference>
<dbReference type="NCBIfam" id="NF002990">
    <property type="entry name" value="PRK03735.1"/>
    <property type="match status" value="1"/>
</dbReference>
<dbReference type="PANTHER" id="PTHR19271">
    <property type="entry name" value="CYTOCHROME B"/>
    <property type="match status" value="1"/>
</dbReference>
<dbReference type="PANTHER" id="PTHR19271:SF16">
    <property type="entry name" value="CYTOCHROME B"/>
    <property type="match status" value="1"/>
</dbReference>
<dbReference type="Pfam" id="PF00033">
    <property type="entry name" value="Cytochrome_B"/>
    <property type="match status" value="1"/>
</dbReference>
<dbReference type="PIRSF" id="PIRSF000032">
    <property type="entry name" value="Cytochrome_b6"/>
    <property type="match status" value="1"/>
</dbReference>
<dbReference type="SUPFAM" id="SSF81342">
    <property type="entry name" value="Transmembrane di-heme cytochromes"/>
    <property type="match status" value="1"/>
</dbReference>
<dbReference type="PROSITE" id="PS51002">
    <property type="entry name" value="CYTB_NTER"/>
    <property type="match status" value="1"/>
</dbReference>
<organism>
    <name type="scientific">Parasynechococcus marenigrum (strain WH8102)</name>
    <dbReference type="NCBI Taxonomy" id="84588"/>
    <lineage>
        <taxon>Bacteria</taxon>
        <taxon>Bacillati</taxon>
        <taxon>Cyanobacteriota</taxon>
        <taxon>Cyanophyceae</taxon>
        <taxon>Synechococcales</taxon>
        <taxon>Prochlorococcaceae</taxon>
        <taxon>Parasynechococcus</taxon>
        <taxon>Parasynechococcus marenigrum</taxon>
    </lineage>
</organism>
<sequence length="218" mass="24671">MANSSPVYDWFQERLEIQDIADDISTKYVPPHVNIFYCLGGITLVCFLIQFATGFAMTFYYKPTVAEAYSSVQYLMTDVSFGWLIRSVHRWSASMMVLMLILHVFRVYLTGGFKRPRELTWVTGVTMAVITVSFGVTGYSLPWDQVGYWAVKIVSGVPAAIPVVGDFMVELLRGGESVGQSTLTRFYSLHTFVMPWLLAVFMLMHFLMIRKQGISGPL</sequence>
<name>CYB6_PARMW</name>
<feature type="chain" id="PRO_0000061837" description="Cytochrome b6">
    <location>
        <begin position="1"/>
        <end position="218"/>
    </location>
</feature>
<feature type="transmembrane region" description="Helical" evidence="1">
    <location>
        <begin position="35"/>
        <end position="55"/>
    </location>
</feature>
<feature type="transmembrane region" description="Helical" evidence="1">
    <location>
        <begin position="93"/>
        <end position="113"/>
    </location>
</feature>
<feature type="transmembrane region" description="Helical" evidence="1">
    <location>
        <begin position="119"/>
        <end position="139"/>
    </location>
</feature>
<feature type="transmembrane region" description="Helical" evidence="1">
    <location>
        <begin position="189"/>
        <end position="209"/>
    </location>
</feature>
<feature type="binding site" description="covalent" evidence="1">
    <location>
        <position position="38"/>
    </location>
    <ligand>
        <name>heme c</name>
        <dbReference type="ChEBI" id="CHEBI:61717"/>
    </ligand>
</feature>
<feature type="binding site" description="axial binding residue" evidence="1">
    <location>
        <position position="89"/>
    </location>
    <ligand>
        <name>heme b</name>
        <dbReference type="ChEBI" id="CHEBI:60344"/>
        <label>2</label>
    </ligand>
    <ligandPart>
        <name>Fe</name>
        <dbReference type="ChEBI" id="CHEBI:18248"/>
    </ligandPart>
</feature>
<feature type="binding site" description="axial binding residue" evidence="1">
    <location>
        <position position="103"/>
    </location>
    <ligand>
        <name>heme b</name>
        <dbReference type="ChEBI" id="CHEBI:60344"/>
        <label>1</label>
    </ligand>
    <ligandPart>
        <name>Fe</name>
        <dbReference type="ChEBI" id="CHEBI:18248"/>
    </ligandPart>
</feature>
<feature type="binding site" description="axial binding residue" evidence="1">
    <location>
        <position position="190"/>
    </location>
    <ligand>
        <name>heme b</name>
        <dbReference type="ChEBI" id="CHEBI:60344"/>
        <label>2</label>
    </ligand>
    <ligandPart>
        <name>Fe</name>
        <dbReference type="ChEBI" id="CHEBI:18248"/>
    </ligandPart>
</feature>
<feature type="binding site" description="axial binding residue" evidence="1">
    <location>
        <position position="205"/>
    </location>
    <ligand>
        <name>heme b</name>
        <dbReference type="ChEBI" id="CHEBI:60344"/>
        <label>1</label>
    </ligand>
    <ligandPart>
        <name>Fe</name>
        <dbReference type="ChEBI" id="CHEBI:18248"/>
    </ligandPart>
</feature>